<name>Y1422_METPP</name>
<gene>
    <name type="ordered locus">Mpe_A1422</name>
</gene>
<accession>A2SFP5</accession>
<reference key="1">
    <citation type="journal article" date="2007" name="J. Bacteriol.">
        <title>Whole-genome analysis of the methyl tert-butyl ether-degrading beta-proteobacterium Methylibium petroleiphilum PM1.</title>
        <authorList>
            <person name="Kane S.R."/>
            <person name="Chakicherla A.Y."/>
            <person name="Chain P.S.G."/>
            <person name="Schmidt R."/>
            <person name="Shin M.W."/>
            <person name="Legler T.C."/>
            <person name="Scow K.M."/>
            <person name="Larimer F.W."/>
            <person name="Lucas S.M."/>
            <person name="Richardson P.M."/>
            <person name="Hristova K.R."/>
        </authorList>
    </citation>
    <scope>NUCLEOTIDE SEQUENCE [LARGE SCALE GENOMIC DNA]</scope>
    <source>
        <strain>ATCC BAA-1232 / LMG 22953 / PM1</strain>
    </source>
</reference>
<organism>
    <name type="scientific">Methylibium petroleiphilum (strain ATCC BAA-1232 / LMG 22953 / PM1)</name>
    <dbReference type="NCBI Taxonomy" id="420662"/>
    <lineage>
        <taxon>Bacteria</taxon>
        <taxon>Pseudomonadati</taxon>
        <taxon>Pseudomonadota</taxon>
        <taxon>Betaproteobacteria</taxon>
        <taxon>Burkholderiales</taxon>
        <taxon>Sphaerotilaceae</taxon>
        <taxon>Methylibium</taxon>
    </lineage>
</organism>
<dbReference type="EMBL" id="CP000555">
    <property type="protein sequence ID" value="ABM94384.1"/>
    <property type="molecule type" value="Genomic_DNA"/>
</dbReference>
<dbReference type="SMR" id="A2SFP5"/>
<dbReference type="STRING" id="420662.Mpe_A1422"/>
<dbReference type="KEGG" id="mpt:Mpe_A1422"/>
<dbReference type="eggNOG" id="COG1295">
    <property type="taxonomic scope" value="Bacteria"/>
</dbReference>
<dbReference type="HOGENOM" id="CLU_032288_1_2_4"/>
<dbReference type="Proteomes" id="UP000000366">
    <property type="component" value="Chromosome"/>
</dbReference>
<dbReference type="GO" id="GO:0005886">
    <property type="term" value="C:plasma membrane"/>
    <property type="evidence" value="ECO:0007669"/>
    <property type="project" value="UniProtKB-SubCell"/>
</dbReference>
<dbReference type="HAMAP" id="MF_00672">
    <property type="entry name" value="UPF0761"/>
    <property type="match status" value="1"/>
</dbReference>
<dbReference type="InterPro" id="IPR023679">
    <property type="entry name" value="UPF0761_bac"/>
</dbReference>
<dbReference type="InterPro" id="IPR017039">
    <property type="entry name" value="Virul_fac_BrkB"/>
</dbReference>
<dbReference type="NCBIfam" id="TIGR00765">
    <property type="entry name" value="yihY_not_rbn"/>
    <property type="match status" value="1"/>
</dbReference>
<dbReference type="PANTHER" id="PTHR30213">
    <property type="entry name" value="INNER MEMBRANE PROTEIN YHJD"/>
    <property type="match status" value="1"/>
</dbReference>
<dbReference type="PANTHER" id="PTHR30213:SF0">
    <property type="entry name" value="UPF0761 MEMBRANE PROTEIN YIHY"/>
    <property type="match status" value="1"/>
</dbReference>
<dbReference type="Pfam" id="PF03631">
    <property type="entry name" value="Virul_fac_BrkB"/>
    <property type="match status" value="1"/>
</dbReference>
<comment type="subcellular location">
    <subcellularLocation>
        <location evidence="1">Cell inner membrane</location>
        <topology evidence="1">Multi-pass membrane protein</topology>
    </subcellularLocation>
</comment>
<comment type="similarity">
    <text evidence="1">Belongs to the UPF0761 family.</text>
</comment>
<evidence type="ECO:0000255" key="1">
    <source>
        <dbReference type="HAMAP-Rule" id="MF_00672"/>
    </source>
</evidence>
<proteinExistence type="inferred from homology"/>
<feature type="chain" id="PRO_0000391040" description="UPF0761 membrane protein Mpe_A1422">
    <location>
        <begin position="1"/>
        <end position="416"/>
    </location>
</feature>
<feature type="transmembrane region" description="Helical" evidence="1">
    <location>
        <begin position="63"/>
        <end position="83"/>
    </location>
</feature>
<feature type="transmembrane region" description="Helical" evidence="1">
    <location>
        <begin position="120"/>
        <end position="140"/>
    </location>
</feature>
<feature type="transmembrane region" description="Helical" evidence="1">
    <location>
        <begin position="159"/>
        <end position="179"/>
    </location>
</feature>
<feature type="transmembrane region" description="Helical" evidence="1">
    <location>
        <begin position="198"/>
        <end position="218"/>
    </location>
</feature>
<feature type="transmembrane region" description="Helical" evidence="1">
    <location>
        <begin position="234"/>
        <end position="256"/>
    </location>
</feature>
<feature type="transmembrane region" description="Helical" evidence="1">
    <location>
        <begin position="271"/>
        <end position="291"/>
    </location>
</feature>
<keyword id="KW-0997">Cell inner membrane</keyword>
<keyword id="KW-1003">Cell membrane</keyword>
<keyword id="KW-0472">Membrane</keyword>
<keyword id="KW-1185">Reference proteome</keyword>
<keyword id="KW-0812">Transmembrane</keyword>
<keyword id="KW-1133">Transmembrane helix</keyword>
<sequence>MAGIISSMTVPDLLKAGWRERIALLAETLQTWPWLDTLKTLRQRFREDRLGLTASSLTFTTTIALVPLATVTLAIFSAFPMFGQFQGALEKYFIQSLVPDGIAKPVLGALTQFAGKAHRLGTVGLVVLVLTALALMLTIDRTLNAIWRVRKPRPIAQRVLVYWAAATLGPLLLGVSLTLTSYAISASRGVVGAMPGSLSVLLNALEFGLLAAAMAGLFHYVPNTEVRWRHALAGGLFVSAGFELAKKGLAWYLAQVPTYSTIYGAFATVPIFLIWLYLGWVIVLLGAVIAAYAPSLSMHIVRQPNTPGYRFQAAVQLLRELAAARARGERGLGLVGLASTLRTDPLQIEPSLERLVELDWVGRLDEAGEKRYVLLCDPNTTPAQPLLAALLLDPSPGLRGFWQRARFGEMTLQELI</sequence>
<protein>
    <recommendedName>
        <fullName evidence="1">UPF0761 membrane protein Mpe_A1422</fullName>
    </recommendedName>
</protein>